<dbReference type="EMBL" id="AE015924">
    <property type="protein sequence ID" value="AAQ66975.1"/>
    <property type="molecule type" value="Genomic_DNA"/>
</dbReference>
<dbReference type="RefSeq" id="WP_005874941.1">
    <property type="nucleotide sequence ID" value="NC_002950.2"/>
</dbReference>
<dbReference type="STRING" id="242619.PG_2004"/>
<dbReference type="EnsemblBacteria" id="AAQ66975">
    <property type="protein sequence ID" value="AAQ66975"/>
    <property type="gene ID" value="PG_2004"/>
</dbReference>
<dbReference type="KEGG" id="pgi:PG_2004"/>
<dbReference type="eggNOG" id="COG2855">
    <property type="taxonomic scope" value="Bacteria"/>
</dbReference>
<dbReference type="HOGENOM" id="CLU_033541_2_0_10"/>
<dbReference type="Proteomes" id="UP000000588">
    <property type="component" value="Chromosome"/>
</dbReference>
<dbReference type="GO" id="GO:0005886">
    <property type="term" value="C:plasma membrane"/>
    <property type="evidence" value="ECO:0007669"/>
    <property type="project" value="UniProtKB-SubCell"/>
</dbReference>
<dbReference type="InterPro" id="IPR018383">
    <property type="entry name" value="UPF0324_pro"/>
</dbReference>
<dbReference type="PANTHER" id="PTHR30106">
    <property type="entry name" value="INNER MEMBRANE PROTEIN YEIH-RELATED"/>
    <property type="match status" value="1"/>
</dbReference>
<dbReference type="PANTHER" id="PTHR30106:SF1">
    <property type="entry name" value="UPF0324 MEMBRANE PROTEIN FN0533"/>
    <property type="match status" value="1"/>
</dbReference>
<dbReference type="Pfam" id="PF03601">
    <property type="entry name" value="Cons_hypoth698"/>
    <property type="match status" value="1"/>
</dbReference>
<sequence length="330" mass="35596">MNTDNPKSHISRIAYPAIIVFLILTLLGSLVERFHPFTSWLTPPVALLMGLAYALIFGSTHRRANKLGSKVLLQYSVVGLGFGMNLGESLASGRDGMMFTIISVFGTLLLGWFIGRKILQMNRNTSALISAGTAICGGSAIAAVGPILKAEEHEMSVALGTVFLLNAVALFIFPSIGHWLALDQQQFGTWAAIAIHDTSSVVGAGSAYGEEALRVATTIKLTRALWIVPLTLVFSFVYKTKGAKRFPVPLFILFFIGAIILNTYLLEAYFPEVGRFVASLARKGLTLSLFFIGASLTKEVIASVGVRALLQGLFLWILISVGSLAFILLI</sequence>
<name>Y2004_PORGI</name>
<comment type="subcellular location">
    <subcellularLocation>
        <location evidence="2">Cell membrane</location>
        <topology evidence="2">Multi-pass membrane protein</topology>
    </subcellularLocation>
</comment>
<comment type="similarity">
    <text evidence="2">Belongs to the UPF0324 family.</text>
</comment>
<proteinExistence type="inferred from homology"/>
<accession>Q7MTF7</accession>
<keyword id="KW-1003">Cell membrane</keyword>
<keyword id="KW-0472">Membrane</keyword>
<keyword id="KW-1185">Reference proteome</keyword>
<keyword id="KW-0812">Transmembrane</keyword>
<keyword id="KW-1133">Transmembrane helix</keyword>
<evidence type="ECO:0000255" key="1"/>
<evidence type="ECO:0000305" key="2"/>
<protein>
    <recommendedName>
        <fullName>UPF0324 membrane protein PG_2004</fullName>
    </recommendedName>
</protein>
<feature type="chain" id="PRO_0000157438" description="UPF0324 membrane protein PG_2004">
    <location>
        <begin position="1"/>
        <end position="330"/>
    </location>
</feature>
<feature type="transmembrane region" description="Helical" evidence="1">
    <location>
        <begin position="13"/>
        <end position="31"/>
    </location>
</feature>
<feature type="transmembrane region" description="Helical" evidence="1">
    <location>
        <begin position="36"/>
        <end position="58"/>
    </location>
</feature>
<feature type="transmembrane region" description="Helical" evidence="1">
    <location>
        <begin position="71"/>
        <end position="93"/>
    </location>
</feature>
<feature type="transmembrane region" description="Helical" evidence="1">
    <location>
        <begin position="97"/>
        <end position="114"/>
    </location>
</feature>
<feature type="transmembrane region" description="Helical" evidence="1">
    <location>
        <begin position="126"/>
        <end position="148"/>
    </location>
</feature>
<feature type="transmembrane region" description="Helical" evidence="1">
    <location>
        <begin position="158"/>
        <end position="180"/>
    </location>
</feature>
<feature type="transmembrane region" description="Helical" evidence="1">
    <location>
        <begin position="248"/>
        <end position="270"/>
    </location>
</feature>
<feature type="transmembrane region" description="Helical" evidence="1">
    <location>
        <begin position="285"/>
        <end position="307"/>
    </location>
</feature>
<feature type="transmembrane region" description="Helical" evidence="1">
    <location>
        <begin position="312"/>
        <end position="329"/>
    </location>
</feature>
<organism>
    <name type="scientific">Porphyromonas gingivalis (strain ATCC BAA-308 / W83)</name>
    <dbReference type="NCBI Taxonomy" id="242619"/>
    <lineage>
        <taxon>Bacteria</taxon>
        <taxon>Pseudomonadati</taxon>
        <taxon>Bacteroidota</taxon>
        <taxon>Bacteroidia</taxon>
        <taxon>Bacteroidales</taxon>
        <taxon>Porphyromonadaceae</taxon>
        <taxon>Porphyromonas</taxon>
    </lineage>
</organism>
<reference key="1">
    <citation type="journal article" date="2003" name="J. Bacteriol.">
        <title>Complete genome sequence of the oral pathogenic bacterium Porphyromonas gingivalis strain W83.</title>
        <authorList>
            <person name="Nelson K.E."/>
            <person name="Fleischmann R.D."/>
            <person name="DeBoy R.T."/>
            <person name="Paulsen I.T."/>
            <person name="Fouts D.E."/>
            <person name="Eisen J.A."/>
            <person name="Daugherty S.C."/>
            <person name="Dodson R.J."/>
            <person name="Durkin A.S."/>
            <person name="Gwinn M.L."/>
            <person name="Haft D.H."/>
            <person name="Kolonay J.F."/>
            <person name="Nelson W.C."/>
            <person name="Mason T.M."/>
            <person name="Tallon L."/>
            <person name="Gray J."/>
            <person name="Granger D."/>
            <person name="Tettelin H."/>
            <person name="Dong H."/>
            <person name="Galvin J.L."/>
            <person name="Duncan M.J."/>
            <person name="Dewhirst F.E."/>
            <person name="Fraser C.M."/>
        </authorList>
    </citation>
    <scope>NUCLEOTIDE SEQUENCE [LARGE SCALE GENOMIC DNA]</scope>
    <source>
        <strain>ATCC BAA-308 / W83</strain>
    </source>
</reference>
<gene>
    <name type="ordered locus">PG_2004</name>
</gene>